<dbReference type="EC" id="3.6.1.41" evidence="1"/>
<dbReference type="EMBL" id="CU928158">
    <property type="protein sequence ID" value="CAQ87646.1"/>
    <property type="molecule type" value="Genomic_DNA"/>
</dbReference>
<dbReference type="RefSeq" id="WP_000257193.1">
    <property type="nucleotide sequence ID" value="NC_011740.1"/>
</dbReference>
<dbReference type="SMR" id="B7LVU3"/>
<dbReference type="GeneID" id="75058852"/>
<dbReference type="KEGG" id="efe:EFER_0060"/>
<dbReference type="HOGENOM" id="CLU_056184_2_0_6"/>
<dbReference type="OrthoDB" id="9807890at2"/>
<dbReference type="Proteomes" id="UP000000745">
    <property type="component" value="Chromosome"/>
</dbReference>
<dbReference type="GO" id="GO:0008803">
    <property type="term" value="F:bis(5'-nucleosyl)-tetraphosphatase (symmetrical) activity"/>
    <property type="evidence" value="ECO:0007669"/>
    <property type="project" value="UniProtKB-UniRule"/>
</dbReference>
<dbReference type="CDD" id="cd07422">
    <property type="entry name" value="MPP_ApaH"/>
    <property type="match status" value="1"/>
</dbReference>
<dbReference type="FunFam" id="3.60.21.10:FF:000013">
    <property type="entry name" value="Bis(5'-nucleosyl)-tetraphosphatase, symmetrical"/>
    <property type="match status" value="1"/>
</dbReference>
<dbReference type="Gene3D" id="3.60.21.10">
    <property type="match status" value="1"/>
</dbReference>
<dbReference type="HAMAP" id="MF_00199">
    <property type="entry name" value="ApaH"/>
    <property type="match status" value="1"/>
</dbReference>
<dbReference type="InterPro" id="IPR004617">
    <property type="entry name" value="ApaH"/>
</dbReference>
<dbReference type="InterPro" id="IPR004843">
    <property type="entry name" value="Calcineurin-like_PHP_ApaH"/>
</dbReference>
<dbReference type="InterPro" id="IPR029052">
    <property type="entry name" value="Metallo-depent_PP-like"/>
</dbReference>
<dbReference type="NCBIfam" id="TIGR00668">
    <property type="entry name" value="apaH"/>
    <property type="match status" value="1"/>
</dbReference>
<dbReference type="NCBIfam" id="NF001204">
    <property type="entry name" value="PRK00166.1"/>
    <property type="match status" value="1"/>
</dbReference>
<dbReference type="PANTHER" id="PTHR40942">
    <property type="match status" value="1"/>
</dbReference>
<dbReference type="PANTHER" id="PTHR40942:SF4">
    <property type="entry name" value="CYTOCHROME C5"/>
    <property type="match status" value="1"/>
</dbReference>
<dbReference type="Pfam" id="PF00149">
    <property type="entry name" value="Metallophos"/>
    <property type="match status" value="1"/>
</dbReference>
<dbReference type="PIRSF" id="PIRSF000903">
    <property type="entry name" value="B5n-ttraPtase_sm"/>
    <property type="match status" value="1"/>
</dbReference>
<dbReference type="SUPFAM" id="SSF56300">
    <property type="entry name" value="Metallo-dependent phosphatases"/>
    <property type="match status" value="1"/>
</dbReference>
<sequence>MATYLIGDVHGCYDELIALLHKVEFTPGKDTLWLTGDLVARGPGSLDVLRYVKSLGDSVRLVLGNHDLHLLAVFAGISRNKPKDRLTPLLEAPDADELLNWLRRQPLLQIDEEKKLVMAHAGITPQWDLQTAKECARDVEAVLSSDSYPFFLDAMYGDMPNNWSPELRGLGRLRFITNAFTRMRFCFPNGQLDMYSKESPEEAPAPLKPWFAIPGPVAEEYSIAFGHWASLEGKGTPEGIYALDTGCCWGGTLTCLRWEDKQYFVQPSNRHKDLGEGEAVAS</sequence>
<name>APAH_ESCF3</name>
<keyword id="KW-0378">Hydrolase</keyword>
<reference key="1">
    <citation type="journal article" date="2009" name="PLoS Genet.">
        <title>Organised genome dynamics in the Escherichia coli species results in highly diverse adaptive paths.</title>
        <authorList>
            <person name="Touchon M."/>
            <person name="Hoede C."/>
            <person name="Tenaillon O."/>
            <person name="Barbe V."/>
            <person name="Baeriswyl S."/>
            <person name="Bidet P."/>
            <person name="Bingen E."/>
            <person name="Bonacorsi S."/>
            <person name="Bouchier C."/>
            <person name="Bouvet O."/>
            <person name="Calteau A."/>
            <person name="Chiapello H."/>
            <person name="Clermont O."/>
            <person name="Cruveiller S."/>
            <person name="Danchin A."/>
            <person name="Diard M."/>
            <person name="Dossat C."/>
            <person name="Karoui M.E."/>
            <person name="Frapy E."/>
            <person name="Garry L."/>
            <person name="Ghigo J.M."/>
            <person name="Gilles A.M."/>
            <person name="Johnson J."/>
            <person name="Le Bouguenec C."/>
            <person name="Lescat M."/>
            <person name="Mangenot S."/>
            <person name="Martinez-Jehanne V."/>
            <person name="Matic I."/>
            <person name="Nassif X."/>
            <person name="Oztas S."/>
            <person name="Petit M.A."/>
            <person name="Pichon C."/>
            <person name="Rouy Z."/>
            <person name="Ruf C.S."/>
            <person name="Schneider D."/>
            <person name="Tourret J."/>
            <person name="Vacherie B."/>
            <person name="Vallenet D."/>
            <person name="Medigue C."/>
            <person name="Rocha E.P.C."/>
            <person name="Denamur E."/>
        </authorList>
    </citation>
    <scope>NUCLEOTIDE SEQUENCE [LARGE SCALE GENOMIC DNA]</scope>
    <source>
        <strain>ATCC 35469 / DSM 13698 / BCRC 15582 / CCUG 18766 / IAM 14443 / JCM 21226 / LMG 7866 / NBRC 102419 / NCTC 12128 / CDC 0568-73</strain>
    </source>
</reference>
<organism>
    <name type="scientific">Escherichia fergusonii (strain ATCC 35469 / DSM 13698 / CCUG 18766 / IAM 14443 / JCM 21226 / LMG 7866 / NBRC 102419 / NCTC 12128 / CDC 0568-73)</name>
    <dbReference type="NCBI Taxonomy" id="585054"/>
    <lineage>
        <taxon>Bacteria</taxon>
        <taxon>Pseudomonadati</taxon>
        <taxon>Pseudomonadota</taxon>
        <taxon>Gammaproteobacteria</taxon>
        <taxon>Enterobacterales</taxon>
        <taxon>Enterobacteriaceae</taxon>
        <taxon>Escherichia</taxon>
    </lineage>
</organism>
<gene>
    <name evidence="1" type="primary">apaH</name>
    <name type="ordered locus">EFER_0060</name>
</gene>
<protein>
    <recommendedName>
        <fullName evidence="1">Bis(5'-nucleosyl)-tetraphosphatase, symmetrical</fullName>
        <ecNumber evidence="1">3.6.1.41</ecNumber>
    </recommendedName>
    <alternativeName>
        <fullName evidence="1">Ap4A hydrolase</fullName>
    </alternativeName>
    <alternativeName>
        <fullName evidence="1">Diadenosine 5',5'''-P1,P4-tetraphosphate pyrophosphohydrolase</fullName>
    </alternativeName>
    <alternativeName>
        <fullName evidence="1">Diadenosine tetraphosphatase</fullName>
    </alternativeName>
</protein>
<feature type="chain" id="PRO_1000118697" description="Bis(5'-nucleosyl)-tetraphosphatase, symmetrical">
    <location>
        <begin position="1"/>
        <end position="282"/>
    </location>
</feature>
<evidence type="ECO:0000255" key="1">
    <source>
        <dbReference type="HAMAP-Rule" id="MF_00199"/>
    </source>
</evidence>
<comment type="function">
    <text evidence="1">Hydrolyzes diadenosine 5',5'''-P1,P4-tetraphosphate to yield ADP.</text>
</comment>
<comment type="catalytic activity">
    <reaction evidence="1">
        <text>P(1),P(4)-bis(5'-adenosyl) tetraphosphate + H2O = 2 ADP + 2 H(+)</text>
        <dbReference type="Rhea" id="RHEA:24252"/>
        <dbReference type="ChEBI" id="CHEBI:15377"/>
        <dbReference type="ChEBI" id="CHEBI:15378"/>
        <dbReference type="ChEBI" id="CHEBI:58141"/>
        <dbReference type="ChEBI" id="CHEBI:456216"/>
        <dbReference type="EC" id="3.6.1.41"/>
    </reaction>
</comment>
<comment type="similarity">
    <text evidence="1">Belongs to the Ap4A hydrolase family.</text>
</comment>
<accession>B7LVU3</accession>
<proteinExistence type="inferred from homology"/>